<evidence type="ECO:0000269" key="1">
    <source>
    </source>
</evidence>
<evidence type="ECO:0000269" key="2">
    <source>
    </source>
</evidence>
<evidence type="ECO:0000269" key="3">
    <source>
    </source>
</evidence>
<evidence type="ECO:0000305" key="4"/>
<reference key="1">
    <citation type="journal article" date="2000" name="J. Biol. Chem.">
        <title>Functional characterization of five eIF4E isoforms in Caenorhabditis elegans.</title>
        <authorList>
            <person name="Keiper B.D."/>
            <person name="Lamphear B.J."/>
            <person name="Deshpande A.M."/>
            <person name="Jankowska-Anyszka M."/>
            <person name="Aamodt E.J."/>
            <person name="Blumenthal T."/>
            <person name="Rhoads R.E."/>
        </authorList>
    </citation>
    <scope>NUCLEOTIDE SEQUENCE [MRNA]</scope>
    <scope>FUNCTION</scope>
    <source>
        <strain>Bristol N2</strain>
    </source>
</reference>
<reference key="2">
    <citation type="journal article" date="1998" name="Science">
        <title>Genome sequence of the nematode C. elegans: a platform for investigating biology.</title>
        <authorList>
            <consortium name="The C. elegans sequencing consortium"/>
        </authorList>
    </citation>
    <scope>NUCLEOTIDE SEQUENCE [LARGE SCALE GENOMIC DNA]</scope>
    <source>
        <strain>Bristol N2</strain>
    </source>
</reference>
<reference key="3">
    <citation type="journal article" date="2001" name="Development">
        <title>An isoform of eIF4E is a component of germ granules and is required for spermatogenesis in C. elegans.</title>
        <authorList>
            <person name="Amiri A."/>
            <person name="Keiper B.D."/>
            <person name="Kawasaki I."/>
            <person name="Fan Y."/>
            <person name="Kohara Y."/>
            <person name="Rhoads R.E."/>
            <person name="Strome S."/>
        </authorList>
    </citation>
    <scope>TISSUE SPECIFICITY</scope>
    <source>
        <strain>Bristol N2</strain>
    </source>
</reference>
<reference key="4">
    <citation type="journal article" date="2002" name="Acta Biochim. Pol.">
        <title>Interaction of three Caenorhabditis elegans isoforms of translation initiation factor eIF4E with mono- and trimethylated mRNA 5' cap analogues.</title>
        <authorList>
            <person name="Stachelska A."/>
            <person name="Wieczorek Z."/>
            <person name="Ruszczynska K."/>
            <person name="Stolarski R."/>
            <person name="Pietrzak M."/>
            <person name="Lamphear B.J."/>
            <person name="Rhoads R.E."/>
            <person name="Darzynkiewicz E."/>
            <person name="Jankowska-Anyszka M."/>
        </authorList>
    </citation>
    <scope>FUNCTION</scope>
    <scope>DISULFIDE BOND</scope>
    <scope>MUTAGENESIS</scope>
</reference>
<name>IF4E5_CAEEL</name>
<keyword id="KW-1015">Disulfide bond</keyword>
<keyword id="KW-0396">Initiation factor</keyword>
<keyword id="KW-0648">Protein biosynthesis</keyword>
<keyword id="KW-1185">Reference proteome</keyword>
<keyword id="KW-0694">RNA-binding</keyword>
<keyword id="KW-0810">Translation regulation</keyword>
<feature type="chain" id="PRO_0000193647" description="Eukaryotic translation initiation factor 4E-5">
    <location>
        <begin position="1"/>
        <end position="201"/>
    </location>
</feature>
<feature type="disulfide bond" evidence="3">
    <location>
        <begin position="122"/>
        <end position="126"/>
    </location>
</feature>
<feature type="mutagenesis site" description="No change in selectivity for monomethyl cap structures. Selectivity slightly decreased; when associated with N-64--73-K." evidence="3">
    <original>NDDRNASWQ</original>
    <variation>KADRNKEWE</variation>
    <location>
        <begin position="21"/>
        <end position="29"/>
    </location>
</feature>
<feature type="mutagenesis site" description="High selectivity for monomethyl cap structures. Selectivity slightly decreased; when associated with N-21--29-Q." evidence="3">
    <original>NVFRDDIQPK</original>
    <variation>YLFKEGIKPM</variation>
    <location>
        <begin position="64"/>
        <end position="73"/>
    </location>
</feature>
<feature type="mutagenesis site" description="High selectivity for monomethyl cap structures. Increased selectivity; when associated with L-65." evidence="3">
    <original>N</original>
    <variation>Y</variation>
    <location>
        <position position="64"/>
    </location>
</feature>
<feature type="mutagenesis site" description="High selectivity for monomethyl cap structures. Increased selectivity; when associated with Y-64." evidence="3">
    <original>V</original>
    <variation>L</variation>
    <location>
        <position position="65"/>
    </location>
</feature>
<feature type="mutagenesis site" description="No change in selectivity for monomethyl cap structures." evidence="3">
    <original>DDIQPK</original>
    <variation>EGIKPM</variation>
    <location>
        <begin position="68"/>
        <end position="73"/>
    </location>
</feature>
<feature type="mutagenesis site" description="Small increase in selectivity for monomethyl cap structures." evidence="3">
    <original>QPK</original>
    <variation>KPM</variation>
    <location>
        <begin position="71"/>
        <end position="73"/>
    </location>
</feature>
<feature type="mutagenesis site" description="Low selectivity for monomethyl cap structures. Selectivity slightly increased; when associated with mutagenesis with N-21--29-Q." evidence="3">
    <original>KWEAPENWD</original>
    <variation>WEDVNNVQM</variation>
    <location>
        <begin position="73"/>
        <end position="81"/>
    </location>
</feature>
<feature type="mutagenesis site" description="Unfolded protein." evidence="3">
    <original>C</original>
    <variation>S</variation>
    <location>
        <position position="122"/>
    </location>
</feature>
<feature type="mutagenesis site" description="Unfolded protein." evidence="3">
    <original>C</original>
    <variation>S</variation>
    <location>
        <position position="126"/>
    </location>
</feature>
<sequence length="201" mass="23278">MTELTTPIYPLQRNWSWWFLNDDRNASWQDRLKKVYTFNTVPEFWAFYEAILPPSGLNDLCDYNVFRDDIQPKWEAPENWDGGRWLIIINKGKTPEVLDAVWLEILLALIGEQFGKDMESICGLVCNVRGQGSKISVWTKNCNDDDTNMRIGVVLKEKLMAAASKAHSKPLFDVIHYQTHRNCVKKTTSALKYKFSLKSIV</sequence>
<gene>
    <name type="primary">ife-5</name>
    <name type="ORF">Y57A10A.30</name>
</gene>
<dbReference type="EMBL" id="AF214652">
    <property type="protein sequence ID" value="AAF62415.1"/>
    <property type="molecule type" value="mRNA"/>
</dbReference>
<dbReference type="EMBL" id="AL117195">
    <property type="protein sequence ID" value="CAB55035.1"/>
    <property type="molecule type" value="Genomic_DNA"/>
</dbReference>
<dbReference type="PIR" id="T31652">
    <property type="entry name" value="T31652"/>
</dbReference>
<dbReference type="RefSeq" id="NP_001022479.1">
    <property type="nucleotide sequence ID" value="NM_001027308.6"/>
</dbReference>
<dbReference type="RefSeq" id="NP_001379255.1">
    <property type="nucleotide sequence ID" value="NM_001393209.1"/>
</dbReference>
<dbReference type="SMR" id="P56570"/>
<dbReference type="BioGRID" id="40172">
    <property type="interactions" value="1"/>
</dbReference>
<dbReference type="FunCoup" id="P56570">
    <property type="interactions" value="153"/>
</dbReference>
<dbReference type="STRING" id="6239.Y57A10A.30.4"/>
<dbReference type="PaxDb" id="6239-Y57A10A.30.2"/>
<dbReference type="PeptideAtlas" id="P56570"/>
<dbReference type="EnsemblMetazoa" id="Y57A10A.30.1">
    <property type="protein sequence ID" value="Y57A10A.30.1"/>
    <property type="gene ID" value="WBGene00002063"/>
</dbReference>
<dbReference type="EnsemblMetazoa" id="Y57A10A.30.2">
    <property type="protein sequence ID" value="Y57A10A.30.2"/>
    <property type="gene ID" value="WBGene00002063"/>
</dbReference>
<dbReference type="GeneID" id="174871"/>
<dbReference type="UCSC" id="Y57A10A.30.2">
    <property type="organism name" value="c. elegans"/>
</dbReference>
<dbReference type="AGR" id="WB:WBGene00002063"/>
<dbReference type="WormBase" id="Y57A10A.30">
    <property type="protein sequence ID" value="CE22608"/>
    <property type="gene ID" value="WBGene00002063"/>
    <property type="gene designation" value="ife-5"/>
</dbReference>
<dbReference type="eggNOG" id="KOG1670">
    <property type="taxonomic scope" value="Eukaryota"/>
</dbReference>
<dbReference type="GeneTree" id="ENSGT01060000253277"/>
<dbReference type="HOGENOM" id="CLU_043552_1_0_1"/>
<dbReference type="InParanoid" id="P56570"/>
<dbReference type="OMA" id="WALYINI"/>
<dbReference type="OrthoDB" id="590761at2759"/>
<dbReference type="PhylomeDB" id="P56570"/>
<dbReference type="Reactome" id="R-CEL-1169408">
    <property type="pathway name" value="ISG15 antiviral mechanism"/>
</dbReference>
<dbReference type="Reactome" id="R-CEL-156827">
    <property type="pathway name" value="L13a-mediated translational silencing of Ceruloplasmin expression"/>
</dbReference>
<dbReference type="Reactome" id="R-CEL-72649">
    <property type="pathway name" value="Translation initiation complex formation"/>
</dbReference>
<dbReference type="Reactome" id="R-CEL-72662">
    <property type="pathway name" value="Activation of the mRNA upon binding of the cap-binding complex and eIFs, and subsequent binding to 43S"/>
</dbReference>
<dbReference type="Reactome" id="R-CEL-72702">
    <property type="pathway name" value="Ribosomal scanning and start codon recognition"/>
</dbReference>
<dbReference type="PRO" id="PR:P56570"/>
<dbReference type="Proteomes" id="UP000001940">
    <property type="component" value="Chromosome II"/>
</dbReference>
<dbReference type="Bgee" id="WBGene00002063">
    <property type="expression patterns" value="Expressed in adult organism and 4 other cell types or tissues"/>
</dbReference>
<dbReference type="GO" id="GO:0016281">
    <property type="term" value="C:eukaryotic translation initiation factor 4F complex"/>
    <property type="evidence" value="ECO:0000318"/>
    <property type="project" value="GO_Central"/>
</dbReference>
<dbReference type="GO" id="GO:0000340">
    <property type="term" value="F:RNA 7-methylguanosine cap binding"/>
    <property type="evidence" value="ECO:0000314"/>
    <property type="project" value="WormBase"/>
</dbReference>
<dbReference type="GO" id="GO:0000341">
    <property type="term" value="F:RNA trimethylguanosine cap binding"/>
    <property type="evidence" value="ECO:0000314"/>
    <property type="project" value="WormBase"/>
</dbReference>
<dbReference type="GO" id="GO:0003743">
    <property type="term" value="F:translation initiation factor activity"/>
    <property type="evidence" value="ECO:0000318"/>
    <property type="project" value="GO_Central"/>
</dbReference>
<dbReference type="GO" id="GO:0009792">
    <property type="term" value="P:embryo development ending in birth or egg hatching"/>
    <property type="evidence" value="ECO:0000316"/>
    <property type="project" value="WormBase"/>
</dbReference>
<dbReference type="GO" id="GO:0006417">
    <property type="term" value="P:regulation of translation"/>
    <property type="evidence" value="ECO:0007669"/>
    <property type="project" value="UniProtKB-KW"/>
</dbReference>
<dbReference type="GO" id="GO:0006413">
    <property type="term" value="P:translational initiation"/>
    <property type="evidence" value="ECO:0000318"/>
    <property type="project" value="GO_Central"/>
</dbReference>
<dbReference type="FunFam" id="3.30.760.10:FF:000017">
    <property type="entry name" value="Eukaryotic translation initiation factor 4E-1"/>
    <property type="match status" value="1"/>
</dbReference>
<dbReference type="Gene3D" id="3.30.760.10">
    <property type="entry name" value="RNA Cap, Translation Initiation Factor Eif4e"/>
    <property type="match status" value="1"/>
</dbReference>
<dbReference type="InterPro" id="IPR023398">
    <property type="entry name" value="TIF_eIF4e-like"/>
</dbReference>
<dbReference type="InterPro" id="IPR001040">
    <property type="entry name" value="TIF_eIF_4E"/>
</dbReference>
<dbReference type="InterPro" id="IPR019770">
    <property type="entry name" value="TIF_eIF_4E_CS"/>
</dbReference>
<dbReference type="PANTHER" id="PTHR11960">
    <property type="entry name" value="EUKARYOTIC TRANSLATION INITIATION FACTOR 4E RELATED"/>
    <property type="match status" value="1"/>
</dbReference>
<dbReference type="PANTHER" id="PTHR11960:SF8">
    <property type="entry name" value="EUKARYOTIC TRANSLATION INITIATION FACTOR 4E1-RELATED"/>
    <property type="match status" value="1"/>
</dbReference>
<dbReference type="Pfam" id="PF01652">
    <property type="entry name" value="IF4E"/>
    <property type="match status" value="1"/>
</dbReference>
<dbReference type="SUPFAM" id="SSF55418">
    <property type="entry name" value="eIF4e-like"/>
    <property type="match status" value="1"/>
</dbReference>
<dbReference type="PROSITE" id="PS00813">
    <property type="entry name" value="IF4E"/>
    <property type="match status" value="1"/>
</dbReference>
<accession>P56570</accession>
<accession>Q9NIF2</accession>
<protein>
    <recommendedName>
        <fullName>Eukaryotic translation initiation factor 4E-5</fullName>
        <shortName>eIF-4E-5</shortName>
        <shortName>eIF4E-5</shortName>
    </recommendedName>
    <alternativeName>
        <fullName>eIF-4F 25 kDa subunit</fullName>
    </alternativeName>
    <alternativeName>
        <fullName>mRNA cap-binding protein</fullName>
    </alternativeName>
</protein>
<comment type="function">
    <text evidence="1 3">Recognizes and binds the 7-methylguanosine-containing mRNA cap during an early step in the initiation of protein synthesis and facilitates ribosome binding by inducing the unwinding of the mRNAs secondary structures. All 5 eIF4E proteins bind monomethyl cap structures. Only ife-1, ife-2 and ife-5 bind trimethyl cap structures which result from trans-splicing. Translation of trimethyl cap structure mRNAs may be regulated by intracellular redox state; disulfide bonds change the width and depth of the cap-binding cavity determining selectivity to mRNA caps.</text>
</comment>
<comment type="subunit">
    <text>eIF4F is a multi-subunit complex, the composition of which varies with external and internal environmental conditions. It is composed of at least eIF4A, eIF4E and eIF4G. eIF4E is also known to interact with other partners.</text>
</comment>
<comment type="tissue specificity">
    <text evidence="2">Enriched in the germline.</text>
</comment>
<comment type="similarity">
    <text evidence="4">Belongs to the eukaryotic initiation factor 4E family.</text>
</comment>
<proteinExistence type="evidence at protein level"/>
<organism>
    <name type="scientific">Caenorhabditis elegans</name>
    <dbReference type="NCBI Taxonomy" id="6239"/>
    <lineage>
        <taxon>Eukaryota</taxon>
        <taxon>Metazoa</taxon>
        <taxon>Ecdysozoa</taxon>
        <taxon>Nematoda</taxon>
        <taxon>Chromadorea</taxon>
        <taxon>Rhabditida</taxon>
        <taxon>Rhabditina</taxon>
        <taxon>Rhabditomorpha</taxon>
        <taxon>Rhabditoidea</taxon>
        <taxon>Rhabditidae</taxon>
        <taxon>Peloderinae</taxon>
        <taxon>Caenorhabditis</taxon>
    </lineage>
</organism>